<gene>
    <name evidence="1" type="primary">pyrI</name>
    <name type="ordered locus">Tneu_1588</name>
</gene>
<protein>
    <recommendedName>
        <fullName evidence="1">Aspartate carbamoyltransferase regulatory chain</fullName>
    </recommendedName>
</protein>
<comment type="function">
    <text evidence="1">Involved in allosteric regulation of aspartate carbamoyltransferase.</text>
</comment>
<comment type="cofactor">
    <cofactor evidence="1">
        <name>Zn(2+)</name>
        <dbReference type="ChEBI" id="CHEBI:29105"/>
    </cofactor>
    <text evidence="1">Binds 1 zinc ion per subunit.</text>
</comment>
<comment type="subunit">
    <text evidence="1">Contains catalytic and regulatory chains.</text>
</comment>
<comment type="similarity">
    <text evidence="1">Belongs to the PyrI family.</text>
</comment>
<dbReference type="EMBL" id="CP001014">
    <property type="protein sequence ID" value="ACB40511.1"/>
    <property type="molecule type" value="Genomic_DNA"/>
</dbReference>
<dbReference type="RefSeq" id="WP_012350930.1">
    <property type="nucleotide sequence ID" value="NC_010525.1"/>
</dbReference>
<dbReference type="SMR" id="B1Y9W1"/>
<dbReference type="STRING" id="444157.Tneu_1588"/>
<dbReference type="GeneID" id="6166098"/>
<dbReference type="KEGG" id="tne:Tneu_1588"/>
<dbReference type="eggNOG" id="arCOG04229">
    <property type="taxonomic scope" value="Archaea"/>
</dbReference>
<dbReference type="HOGENOM" id="CLU_128576_0_0_2"/>
<dbReference type="OrthoDB" id="7000at2157"/>
<dbReference type="Proteomes" id="UP000001694">
    <property type="component" value="Chromosome"/>
</dbReference>
<dbReference type="GO" id="GO:0009347">
    <property type="term" value="C:aspartate carbamoyltransferase complex"/>
    <property type="evidence" value="ECO:0007669"/>
    <property type="project" value="InterPro"/>
</dbReference>
<dbReference type="GO" id="GO:0046872">
    <property type="term" value="F:metal ion binding"/>
    <property type="evidence" value="ECO:0007669"/>
    <property type="project" value="UniProtKB-KW"/>
</dbReference>
<dbReference type="GO" id="GO:0006207">
    <property type="term" value="P:'de novo' pyrimidine nucleobase biosynthetic process"/>
    <property type="evidence" value="ECO:0007669"/>
    <property type="project" value="InterPro"/>
</dbReference>
<dbReference type="GO" id="GO:0006221">
    <property type="term" value="P:pyrimidine nucleotide biosynthetic process"/>
    <property type="evidence" value="ECO:0007669"/>
    <property type="project" value="UniProtKB-UniRule"/>
</dbReference>
<dbReference type="Gene3D" id="2.30.30.20">
    <property type="entry name" value="Aspartate carbamoyltransferase regulatory subunit, C-terminal domain"/>
    <property type="match status" value="1"/>
</dbReference>
<dbReference type="Gene3D" id="3.30.70.140">
    <property type="entry name" value="Aspartate carbamoyltransferase regulatory subunit, N-terminal domain"/>
    <property type="match status" value="1"/>
</dbReference>
<dbReference type="HAMAP" id="MF_00002">
    <property type="entry name" value="Asp_carb_tr_reg"/>
    <property type="match status" value="1"/>
</dbReference>
<dbReference type="InterPro" id="IPR020545">
    <property type="entry name" value="Asp_carbamoyltransf_reg_N"/>
</dbReference>
<dbReference type="InterPro" id="IPR002801">
    <property type="entry name" value="Asp_carbamoylTrfase_reg"/>
</dbReference>
<dbReference type="InterPro" id="IPR020542">
    <property type="entry name" value="Asp_carbamoyltrfase_reg_C"/>
</dbReference>
<dbReference type="InterPro" id="IPR036792">
    <property type="entry name" value="Asp_carbatrfase_reg_C_sf"/>
</dbReference>
<dbReference type="InterPro" id="IPR036793">
    <property type="entry name" value="Asp_carbatrfase_reg_N_sf"/>
</dbReference>
<dbReference type="NCBIfam" id="TIGR00240">
    <property type="entry name" value="ATCase_reg"/>
    <property type="match status" value="1"/>
</dbReference>
<dbReference type="PANTHER" id="PTHR35805">
    <property type="entry name" value="ASPARTATE CARBAMOYLTRANSFERASE REGULATORY CHAIN"/>
    <property type="match status" value="1"/>
</dbReference>
<dbReference type="PANTHER" id="PTHR35805:SF1">
    <property type="entry name" value="ASPARTATE CARBAMOYLTRANSFERASE REGULATORY CHAIN"/>
    <property type="match status" value="1"/>
</dbReference>
<dbReference type="Pfam" id="PF01948">
    <property type="entry name" value="PyrI"/>
    <property type="match status" value="1"/>
</dbReference>
<dbReference type="Pfam" id="PF02748">
    <property type="entry name" value="PyrI_C"/>
    <property type="match status" value="1"/>
</dbReference>
<dbReference type="SUPFAM" id="SSF57825">
    <property type="entry name" value="Aspartate carbamoyltransferase, Regulatory-chain, C-terminal domain"/>
    <property type="match status" value="1"/>
</dbReference>
<dbReference type="SUPFAM" id="SSF54893">
    <property type="entry name" value="Aspartate carbamoyltransferase, Regulatory-chain, N-terminal domain"/>
    <property type="match status" value="1"/>
</dbReference>
<evidence type="ECO:0000255" key="1">
    <source>
        <dbReference type="HAMAP-Rule" id="MF_00002"/>
    </source>
</evidence>
<reference key="1">
    <citation type="submission" date="2008-03" db="EMBL/GenBank/DDBJ databases">
        <title>Complete sequence of Thermoproteus neutrophilus V24Sta.</title>
        <authorList>
            <consortium name="US DOE Joint Genome Institute"/>
            <person name="Copeland A."/>
            <person name="Lucas S."/>
            <person name="Lapidus A."/>
            <person name="Glavina del Rio T."/>
            <person name="Dalin E."/>
            <person name="Tice H."/>
            <person name="Bruce D."/>
            <person name="Goodwin L."/>
            <person name="Pitluck S."/>
            <person name="Sims D."/>
            <person name="Brettin T."/>
            <person name="Detter J.C."/>
            <person name="Han C."/>
            <person name="Kuske C.R."/>
            <person name="Schmutz J."/>
            <person name="Larimer F."/>
            <person name="Land M."/>
            <person name="Hauser L."/>
            <person name="Kyrpides N."/>
            <person name="Mikhailova N."/>
            <person name="Biddle J.F."/>
            <person name="Zhang Z."/>
            <person name="Fitz-Gibbon S.T."/>
            <person name="Lowe T.M."/>
            <person name="Saltikov C."/>
            <person name="House C.H."/>
            <person name="Richardson P."/>
        </authorList>
    </citation>
    <scope>NUCLEOTIDE SEQUENCE [LARGE SCALE GENOMIC DNA]</scope>
    <source>
        <strain>DSM 2338 / JCM 9278 / NBRC 100436 / V24Sta</strain>
    </source>
</reference>
<keyword id="KW-0479">Metal-binding</keyword>
<keyword id="KW-0665">Pyrimidine biosynthesis</keyword>
<keyword id="KW-0862">Zinc</keyword>
<sequence length="151" mass="16863">MSKELMVSKIERGTVIDHIPAGRALAVLRVLGITGREGVRVALVMNVESKKLGRKDIVKIEGRELTPEEVNIISAVAPTATINIVRDYTVVRKFKVSPPEVVKGRFRCKNPTCITNAPREPVEPTFLLVRREPPLFVCTYCGRYHELGDLL</sequence>
<accession>B1Y9W1</accession>
<proteinExistence type="inferred from homology"/>
<organism>
    <name type="scientific">Pyrobaculum neutrophilum (strain DSM 2338 / JCM 9278 / NBRC 100436 / V24Sta)</name>
    <name type="common">Thermoproteus neutrophilus</name>
    <dbReference type="NCBI Taxonomy" id="444157"/>
    <lineage>
        <taxon>Archaea</taxon>
        <taxon>Thermoproteota</taxon>
        <taxon>Thermoprotei</taxon>
        <taxon>Thermoproteales</taxon>
        <taxon>Thermoproteaceae</taxon>
        <taxon>Pyrobaculum</taxon>
    </lineage>
</organism>
<feature type="chain" id="PRO_1000088842" description="Aspartate carbamoyltransferase regulatory chain">
    <location>
        <begin position="1"/>
        <end position="151"/>
    </location>
</feature>
<feature type="binding site" evidence="1">
    <location>
        <position position="108"/>
    </location>
    <ligand>
        <name>Zn(2+)</name>
        <dbReference type="ChEBI" id="CHEBI:29105"/>
    </ligand>
</feature>
<feature type="binding site" evidence="1">
    <location>
        <position position="113"/>
    </location>
    <ligand>
        <name>Zn(2+)</name>
        <dbReference type="ChEBI" id="CHEBI:29105"/>
    </ligand>
</feature>
<feature type="binding site" evidence="1">
    <location>
        <position position="138"/>
    </location>
    <ligand>
        <name>Zn(2+)</name>
        <dbReference type="ChEBI" id="CHEBI:29105"/>
    </ligand>
</feature>
<feature type="binding site" evidence="1">
    <location>
        <position position="141"/>
    </location>
    <ligand>
        <name>Zn(2+)</name>
        <dbReference type="ChEBI" id="CHEBI:29105"/>
    </ligand>
</feature>
<name>PYRI_PYRNV</name>